<reference key="1">
    <citation type="journal article" date="2005" name="J. Bacteriol.">
        <title>Insights on evolution of virulence and resistance from the complete genome analysis of an early methicillin-resistant Staphylococcus aureus strain and a biofilm-producing methicillin-resistant Staphylococcus epidermidis strain.</title>
        <authorList>
            <person name="Gill S.R."/>
            <person name="Fouts D.E."/>
            <person name="Archer G.L."/>
            <person name="Mongodin E.F."/>
            <person name="DeBoy R.T."/>
            <person name="Ravel J."/>
            <person name="Paulsen I.T."/>
            <person name="Kolonay J.F."/>
            <person name="Brinkac L.M."/>
            <person name="Beanan M.J."/>
            <person name="Dodson R.J."/>
            <person name="Daugherty S.C."/>
            <person name="Madupu R."/>
            <person name="Angiuoli S.V."/>
            <person name="Durkin A.S."/>
            <person name="Haft D.H."/>
            <person name="Vamathevan J.J."/>
            <person name="Khouri H."/>
            <person name="Utterback T.R."/>
            <person name="Lee C."/>
            <person name="Dimitrov G."/>
            <person name="Jiang L."/>
            <person name="Qin H."/>
            <person name="Weidman J."/>
            <person name="Tran K."/>
            <person name="Kang K.H."/>
            <person name="Hance I.R."/>
            <person name="Nelson K.E."/>
            <person name="Fraser C.M."/>
        </authorList>
    </citation>
    <scope>NUCLEOTIDE SEQUENCE [LARGE SCALE GENOMIC DNA]</scope>
    <source>
        <strain>COL</strain>
    </source>
</reference>
<name>RXL7_STAAC</name>
<protein>
    <recommendedName>
        <fullName evidence="1">RNA-binding protein SACOL0590</fullName>
    </recommendedName>
    <alternativeName>
        <fullName evidence="2">Putative ribosomal protein L7Ae-like</fullName>
    </alternativeName>
    <alternativeName>
        <fullName evidence="1">Ribosomal protein eL8-like</fullName>
    </alternativeName>
</protein>
<organism>
    <name type="scientific">Staphylococcus aureus (strain COL)</name>
    <dbReference type="NCBI Taxonomy" id="93062"/>
    <lineage>
        <taxon>Bacteria</taxon>
        <taxon>Bacillati</taxon>
        <taxon>Bacillota</taxon>
        <taxon>Bacilli</taxon>
        <taxon>Bacillales</taxon>
        <taxon>Staphylococcaceae</taxon>
        <taxon>Staphylococcus</taxon>
    </lineage>
</organism>
<comment type="similarity">
    <text evidence="1">Belongs to the eukaryotic ribosomal protein eL8 family.</text>
</comment>
<sequence>MSKEKVARFNKQHFVVGLKETLKALKKDQVTSLIIAEDVEVYLMTRVLSQINQKNIPVSFFKSKHALGKHVGINVNATIVALIK</sequence>
<dbReference type="EMBL" id="CP000046">
    <property type="protein sequence ID" value="AAW37700.1"/>
    <property type="molecule type" value="Genomic_DNA"/>
</dbReference>
<dbReference type="RefSeq" id="WP_000031892.1">
    <property type="nucleotide sequence ID" value="NZ_JBGOFO010000009.1"/>
</dbReference>
<dbReference type="SMR" id="Q5HID1"/>
<dbReference type="KEGG" id="sac:SACOL0590"/>
<dbReference type="HOGENOM" id="CLU_168063_0_0_9"/>
<dbReference type="Proteomes" id="UP000000530">
    <property type="component" value="Chromosome"/>
</dbReference>
<dbReference type="GO" id="GO:0003723">
    <property type="term" value="F:RNA binding"/>
    <property type="evidence" value="ECO:0007669"/>
    <property type="project" value="UniProtKB-UniRule"/>
</dbReference>
<dbReference type="Gene3D" id="3.30.1330.30">
    <property type="match status" value="1"/>
</dbReference>
<dbReference type="HAMAP" id="MF_00574">
    <property type="entry name" value="Ribosomal_eL8_Bact"/>
    <property type="match status" value="1"/>
</dbReference>
<dbReference type="InterPro" id="IPR029064">
    <property type="entry name" value="Ribosomal_eL30-like_sf"/>
</dbReference>
<dbReference type="InterPro" id="IPR004038">
    <property type="entry name" value="Ribosomal_eL8/eL30/eS12/Gad45"/>
</dbReference>
<dbReference type="InterPro" id="IPR023460">
    <property type="entry name" value="RNA_bf_YbxF-like"/>
</dbReference>
<dbReference type="NCBIfam" id="NF010123">
    <property type="entry name" value="PRK13600.1"/>
    <property type="match status" value="1"/>
</dbReference>
<dbReference type="Pfam" id="PF01248">
    <property type="entry name" value="Ribosomal_L7Ae"/>
    <property type="match status" value="1"/>
</dbReference>
<dbReference type="SUPFAM" id="SSF55315">
    <property type="entry name" value="L30e-like"/>
    <property type="match status" value="1"/>
</dbReference>
<accession>Q5HID1</accession>
<keyword id="KW-0694">RNA-binding</keyword>
<feature type="chain" id="PRO_0000136815" description="RNA-binding protein SACOL0590">
    <location>
        <begin position="1"/>
        <end position="84"/>
    </location>
</feature>
<proteinExistence type="inferred from homology"/>
<evidence type="ECO:0000255" key="1">
    <source>
        <dbReference type="HAMAP-Rule" id="MF_00574"/>
    </source>
</evidence>
<evidence type="ECO:0000305" key="2"/>
<gene>
    <name type="ordered locus">SACOL0590</name>
</gene>